<evidence type="ECO:0000269" key="1">
    <source>
    </source>
</evidence>
<evidence type="ECO:0000269" key="2">
    <source>
    </source>
</evidence>
<evidence type="ECO:0000269" key="3">
    <source>
    </source>
</evidence>
<evidence type="ECO:0000269" key="4">
    <source>
    </source>
</evidence>
<evidence type="ECO:0000305" key="5"/>
<evidence type="ECO:0000305" key="6">
    <source>
    </source>
</evidence>
<evidence type="ECO:0000305" key="7">
    <source>
    </source>
</evidence>
<evidence type="ECO:0000305" key="8">
    <source>
    </source>
</evidence>
<evidence type="ECO:0007829" key="9">
    <source>
        <dbReference type="PDB" id="3JZ4"/>
    </source>
</evidence>
<gene>
    <name type="primary">gabD</name>
    <name type="ordered locus">b2661</name>
    <name type="ordered locus">JW2636</name>
</gene>
<dbReference type="EC" id="1.2.1.79"/>
<dbReference type="EC" id="1.2.1.-" evidence="3"/>
<dbReference type="EMBL" id="M88334">
    <property type="protein sequence ID" value="AAC36831.1"/>
    <property type="molecule type" value="Genomic_DNA"/>
</dbReference>
<dbReference type="EMBL" id="U00096">
    <property type="protein sequence ID" value="AAC75708.1"/>
    <property type="molecule type" value="Genomic_DNA"/>
</dbReference>
<dbReference type="EMBL" id="AP009048">
    <property type="protein sequence ID" value="BAA16524.2"/>
    <property type="molecule type" value="Genomic_DNA"/>
</dbReference>
<dbReference type="PIR" id="F65045">
    <property type="entry name" value="F65045"/>
</dbReference>
<dbReference type="RefSeq" id="NP_417147.1">
    <property type="nucleotide sequence ID" value="NC_000913.3"/>
</dbReference>
<dbReference type="RefSeq" id="WP_000772831.1">
    <property type="nucleotide sequence ID" value="NZ_LN832404.1"/>
</dbReference>
<dbReference type="PDB" id="3JZ4">
    <property type="method" value="X-ray"/>
    <property type="resolution" value="2.30 A"/>
    <property type="chains" value="A/B/C/D=2-482"/>
</dbReference>
<dbReference type="PDBsum" id="3JZ4"/>
<dbReference type="SMR" id="P25526"/>
<dbReference type="BioGRID" id="4259209">
    <property type="interactions" value="60"/>
</dbReference>
<dbReference type="DIP" id="DIP-9723N"/>
<dbReference type="FunCoup" id="P25526">
    <property type="interactions" value="599"/>
</dbReference>
<dbReference type="IntAct" id="P25526">
    <property type="interactions" value="3"/>
</dbReference>
<dbReference type="STRING" id="511145.b2661"/>
<dbReference type="jPOST" id="P25526"/>
<dbReference type="PaxDb" id="511145-b2661"/>
<dbReference type="EnsemblBacteria" id="AAC75708">
    <property type="protein sequence ID" value="AAC75708"/>
    <property type="gene ID" value="b2661"/>
</dbReference>
<dbReference type="GeneID" id="948060"/>
<dbReference type="KEGG" id="ecj:JW2636"/>
<dbReference type="KEGG" id="eco:b2661"/>
<dbReference type="PATRIC" id="fig|1411691.4.peg.4080"/>
<dbReference type="EchoBASE" id="EB1305"/>
<dbReference type="eggNOG" id="COG1012">
    <property type="taxonomic scope" value="Bacteria"/>
</dbReference>
<dbReference type="HOGENOM" id="CLU_005391_5_1_6"/>
<dbReference type="InParanoid" id="P25526"/>
<dbReference type="OMA" id="IGELFCK"/>
<dbReference type="OrthoDB" id="9812625at2"/>
<dbReference type="PhylomeDB" id="P25526"/>
<dbReference type="BioCyc" id="EcoCyc:SUCCSEMIALDDEHYDROG-MONOMER"/>
<dbReference type="BioCyc" id="MetaCyc:SUCCSEMIALDDEHYDROG-MONOMER"/>
<dbReference type="BRENDA" id="1.2.1.79">
    <property type="organism ID" value="2026"/>
</dbReference>
<dbReference type="UniPathway" id="UPA00733"/>
<dbReference type="EvolutionaryTrace" id="P25526"/>
<dbReference type="PRO" id="PR:P25526"/>
<dbReference type="Proteomes" id="UP000000625">
    <property type="component" value="Chromosome"/>
</dbReference>
<dbReference type="GO" id="GO:0005829">
    <property type="term" value="C:cytosol"/>
    <property type="evidence" value="ECO:0000318"/>
    <property type="project" value="GO_Central"/>
</dbReference>
<dbReference type="GO" id="GO:0032991">
    <property type="term" value="C:protein-containing complex"/>
    <property type="evidence" value="ECO:0000314"/>
    <property type="project" value="EcoCyc"/>
</dbReference>
<dbReference type="GO" id="GO:0102810">
    <property type="term" value="F:glutarate-semialdehyde dehydrogenase (NADP+) activity"/>
    <property type="evidence" value="ECO:0000314"/>
    <property type="project" value="EcoCyc"/>
</dbReference>
<dbReference type="GO" id="GO:0042802">
    <property type="term" value="F:identical protein binding"/>
    <property type="evidence" value="ECO:0000314"/>
    <property type="project" value="EcoCyc"/>
</dbReference>
<dbReference type="GO" id="GO:0050661">
    <property type="term" value="F:NADP binding"/>
    <property type="evidence" value="ECO:0000314"/>
    <property type="project" value="UniProtKB"/>
</dbReference>
<dbReference type="GO" id="GO:0004777">
    <property type="term" value="F:succinate-semialdehyde dehydrogenase (NAD+) activity"/>
    <property type="evidence" value="ECO:0000314"/>
    <property type="project" value="UniProtKB"/>
</dbReference>
<dbReference type="GO" id="GO:0036243">
    <property type="term" value="F:succinate-semialdehyde dehydrogenase (NADP+) activity"/>
    <property type="evidence" value="ECO:0000314"/>
    <property type="project" value="EcoCyc"/>
</dbReference>
<dbReference type="GO" id="GO:0009013">
    <property type="term" value="F:succinate-semialdehyde dehydrogenase [NAD(P)+] activity"/>
    <property type="evidence" value="ECO:0000314"/>
    <property type="project" value="UniProtKB"/>
</dbReference>
<dbReference type="GO" id="GO:1990748">
    <property type="term" value="P:cellular detoxification"/>
    <property type="evidence" value="ECO:0000304"/>
    <property type="project" value="UniProtKB"/>
</dbReference>
<dbReference type="GO" id="GO:0009450">
    <property type="term" value="P:gamma-aminobutyric acid catabolic process"/>
    <property type="evidence" value="ECO:0000314"/>
    <property type="project" value="UniProtKB"/>
</dbReference>
<dbReference type="GO" id="GO:0051289">
    <property type="term" value="P:protein homotetramerization"/>
    <property type="evidence" value="ECO:0000314"/>
    <property type="project" value="EcoCyc"/>
</dbReference>
<dbReference type="CDD" id="cd07103">
    <property type="entry name" value="ALDH_F5_SSADH_GabD"/>
    <property type="match status" value="1"/>
</dbReference>
<dbReference type="FunFam" id="3.40.309.10:FF:000004">
    <property type="entry name" value="Succinate-semialdehyde dehydrogenase I"/>
    <property type="match status" value="1"/>
</dbReference>
<dbReference type="FunFam" id="3.40.605.10:FF:000005">
    <property type="entry name" value="Succinate-semialdehyde dehydrogenase I"/>
    <property type="match status" value="1"/>
</dbReference>
<dbReference type="Gene3D" id="3.40.605.10">
    <property type="entry name" value="Aldehyde Dehydrogenase, Chain A, domain 1"/>
    <property type="match status" value="1"/>
</dbReference>
<dbReference type="Gene3D" id="3.40.309.10">
    <property type="entry name" value="Aldehyde Dehydrogenase, Chain A, domain 2"/>
    <property type="match status" value="1"/>
</dbReference>
<dbReference type="InterPro" id="IPR016161">
    <property type="entry name" value="Ald_DH/histidinol_DH"/>
</dbReference>
<dbReference type="InterPro" id="IPR016163">
    <property type="entry name" value="Ald_DH_C"/>
</dbReference>
<dbReference type="InterPro" id="IPR016160">
    <property type="entry name" value="Ald_DH_CS_CYS"/>
</dbReference>
<dbReference type="InterPro" id="IPR029510">
    <property type="entry name" value="Ald_DH_CS_GLU"/>
</dbReference>
<dbReference type="InterPro" id="IPR016162">
    <property type="entry name" value="Ald_DH_N"/>
</dbReference>
<dbReference type="InterPro" id="IPR015590">
    <property type="entry name" value="Aldehyde_DH_dom"/>
</dbReference>
<dbReference type="InterPro" id="IPR050740">
    <property type="entry name" value="Aldehyde_DH_Superfamily"/>
</dbReference>
<dbReference type="InterPro" id="IPR010102">
    <property type="entry name" value="Succ_semiAld_DH"/>
</dbReference>
<dbReference type="NCBIfam" id="NF008415">
    <property type="entry name" value="PRK11241.1"/>
    <property type="match status" value="1"/>
</dbReference>
<dbReference type="NCBIfam" id="TIGR01780">
    <property type="entry name" value="SSADH"/>
    <property type="match status" value="1"/>
</dbReference>
<dbReference type="PANTHER" id="PTHR43353">
    <property type="entry name" value="SUCCINATE-SEMIALDEHYDE DEHYDROGENASE, MITOCHONDRIAL"/>
    <property type="match status" value="1"/>
</dbReference>
<dbReference type="PANTHER" id="PTHR43353:SF5">
    <property type="entry name" value="SUCCINATE-SEMIALDEHYDE DEHYDROGENASE, MITOCHONDRIAL"/>
    <property type="match status" value="1"/>
</dbReference>
<dbReference type="Pfam" id="PF00171">
    <property type="entry name" value="Aldedh"/>
    <property type="match status" value="1"/>
</dbReference>
<dbReference type="SUPFAM" id="SSF53720">
    <property type="entry name" value="ALDH-like"/>
    <property type="match status" value="1"/>
</dbReference>
<dbReference type="PROSITE" id="PS00070">
    <property type="entry name" value="ALDEHYDE_DEHYDR_CYS"/>
    <property type="match status" value="1"/>
</dbReference>
<dbReference type="PROSITE" id="PS00687">
    <property type="entry name" value="ALDEHYDE_DEHYDR_GLU"/>
    <property type="match status" value="1"/>
</dbReference>
<sequence>MKLNDSNLFRQQALINGEWLDANNGEAIDVTNPANGDKLGSVPKMGADETRAAIDAANRALPAWRALTAKERATILRNWFNLMMEHQDDLARLMTLEQGKPLAEAKGEISYAASFIEWFAEEGKRIYGDTIPGHQADKRLIVIKQPIGVTAAITPWNFPAAMITRKAGPALAAGCTMVLKPASQTPFSALALAELAIRAGVPAGVFNVVTGSAGAVGNELTSNPLVRKLSFTGSTEIGRQLMEQCAKDIKKVSLELGGNAPFIVFDDADLDKAVEGALASKFRNAGQTCVCANRLYVQDGVYDRFAEKLQQAVSKLHIGDGLDNGVTIGPLIDEKAVAKVEEHIADALEKGARVVCGGKAHERGGNFFQPTILVDVPANAKVSKEETFGPLAPLFRFKDEADVIAQANDTEFGLAAYFYARDLSRVFRVGEALEYGIVGINTGIISNEVAPFGGIKASGLGREGSKYGIEDYLEIKYMCIGL</sequence>
<protein>
    <recommendedName>
        <fullName>Succinate-semialdehyde dehydrogenase [NADP(+)] GabD</fullName>
        <shortName>SSDH</shortName>
        <ecNumber>1.2.1.79</ecNumber>
    </recommendedName>
    <alternativeName>
        <fullName evidence="7">Glutarate-semialdehyde dehydrogenase</fullName>
        <ecNumber evidence="3">1.2.1.-</ecNumber>
    </alternativeName>
</protein>
<feature type="chain" id="PRO_0000056572" description="Succinate-semialdehyde dehydrogenase [NADP(+)] GabD">
    <location>
        <begin position="1"/>
        <end position="482"/>
    </location>
</feature>
<feature type="active site" description="Proton acceptor" evidence="6">
    <location>
        <position position="255"/>
    </location>
</feature>
<feature type="active site" description="Nucleophile" evidence="6">
    <location>
        <position position="289"/>
    </location>
</feature>
<feature type="binding site" evidence="2">
    <location>
        <begin position="156"/>
        <end position="157"/>
    </location>
    <ligand>
        <name>NADP(+)</name>
        <dbReference type="ChEBI" id="CHEBI:58349"/>
    </ligand>
</feature>
<feature type="binding site" evidence="2">
    <location>
        <begin position="180"/>
        <end position="183"/>
    </location>
    <ligand>
        <name>NADP(+)</name>
        <dbReference type="ChEBI" id="CHEBI:58349"/>
    </ligand>
</feature>
<feature type="binding site" evidence="2">
    <location>
        <begin position="233"/>
        <end position="234"/>
    </location>
    <ligand>
        <name>NADP(+)</name>
        <dbReference type="ChEBI" id="CHEBI:58349"/>
    </ligand>
</feature>
<feature type="binding site" evidence="2">
    <location>
        <position position="256"/>
    </location>
    <ligand>
        <name>NADP(+)</name>
        <dbReference type="ChEBI" id="CHEBI:58349"/>
    </ligand>
</feature>
<feature type="binding site" evidence="2">
    <location>
        <position position="386"/>
    </location>
    <ligand>
        <name>NADP(+)</name>
        <dbReference type="ChEBI" id="CHEBI:58349"/>
    </ligand>
</feature>
<feature type="helix" evidence="9">
    <location>
        <begin position="6"/>
        <end position="8"/>
    </location>
</feature>
<feature type="strand" evidence="9">
    <location>
        <begin position="12"/>
        <end position="15"/>
    </location>
</feature>
<feature type="strand" evidence="9">
    <location>
        <begin position="18"/>
        <end position="20"/>
    </location>
</feature>
<feature type="strand" evidence="9">
    <location>
        <begin position="27"/>
        <end position="31"/>
    </location>
</feature>
<feature type="turn" evidence="9">
    <location>
        <begin position="33"/>
        <end position="35"/>
    </location>
</feature>
<feature type="strand" evidence="9">
    <location>
        <begin position="38"/>
        <end position="43"/>
    </location>
</feature>
<feature type="helix" evidence="9">
    <location>
        <begin position="47"/>
        <end position="66"/>
    </location>
</feature>
<feature type="helix" evidence="9">
    <location>
        <begin position="69"/>
        <end position="85"/>
    </location>
</feature>
<feature type="helix" evidence="9">
    <location>
        <begin position="87"/>
        <end position="98"/>
    </location>
</feature>
<feature type="helix" evidence="9">
    <location>
        <begin position="102"/>
        <end position="122"/>
    </location>
</feature>
<feature type="helix" evidence="9">
    <location>
        <begin position="123"/>
        <end position="125"/>
    </location>
</feature>
<feature type="strand" evidence="9">
    <location>
        <begin position="128"/>
        <end position="131"/>
    </location>
</feature>
<feature type="strand" evidence="9">
    <location>
        <begin position="138"/>
        <end position="146"/>
    </location>
</feature>
<feature type="strand" evidence="9">
    <location>
        <begin position="149"/>
        <end position="153"/>
    </location>
</feature>
<feature type="strand" evidence="9">
    <location>
        <begin position="156"/>
        <end position="158"/>
    </location>
</feature>
<feature type="helix" evidence="9">
    <location>
        <begin position="161"/>
        <end position="173"/>
    </location>
</feature>
<feature type="strand" evidence="9">
    <location>
        <begin position="176"/>
        <end position="180"/>
    </location>
</feature>
<feature type="helix" evidence="9">
    <location>
        <begin position="187"/>
        <end position="199"/>
    </location>
</feature>
<feature type="turn" evidence="9">
    <location>
        <begin position="203"/>
        <end position="205"/>
    </location>
</feature>
<feature type="strand" evidence="9">
    <location>
        <begin position="206"/>
        <end position="208"/>
    </location>
</feature>
<feature type="helix" evidence="9">
    <location>
        <begin position="214"/>
        <end position="222"/>
    </location>
</feature>
<feature type="strand" evidence="9">
    <location>
        <begin position="226"/>
        <end position="233"/>
    </location>
</feature>
<feature type="helix" evidence="9">
    <location>
        <begin position="235"/>
        <end position="245"/>
    </location>
</feature>
<feature type="turn" evidence="9">
    <location>
        <begin position="246"/>
        <end position="249"/>
    </location>
</feature>
<feature type="strand" evidence="9">
    <location>
        <begin position="251"/>
        <end position="255"/>
    </location>
</feature>
<feature type="strand" evidence="9">
    <location>
        <begin position="260"/>
        <end position="264"/>
    </location>
</feature>
<feature type="helix" evidence="9">
    <location>
        <begin position="270"/>
        <end position="282"/>
    </location>
</feature>
<feature type="helix" evidence="9">
    <location>
        <begin position="283"/>
        <end position="286"/>
    </location>
</feature>
<feature type="strand" evidence="9">
    <location>
        <begin position="291"/>
        <end position="298"/>
    </location>
</feature>
<feature type="helix" evidence="9">
    <location>
        <begin position="299"/>
        <end position="301"/>
    </location>
</feature>
<feature type="helix" evidence="9">
    <location>
        <begin position="302"/>
        <end position="313"/>
    </location>
</feature>
<feature type="helix" evidence="9">
    <location>
        <begin position="334"/>
        <end position="349"/>
    </location>
</feature>
<feature type="strand" evidence="9">
    <location>
        <begin position="353"/>
        <end position="356"/>
    </location>
</feature>
<feature type="strand" evidence="9">
    <location>
        <begin position="371"/>
        <end position="375"/>
    </location>
</feature>
<feature type="helix" evidence="9">
    <location>
        <begin position="381"/>
        <end position="383"/>
    </location>
</feature>
<feature type="strand" evidence="9">
    <location>
        <begin position="389"/>
        <end position="397"/>
    </location>
</feature>
<feature type="helix" evidence="9">
    <location>
        <begin position="400"/>
        <end position="408"/>
    </location>
</feature>
<feature type="strand" evidence="9">
    <location>
        <begin position="414"/>
        <end position="419"/>
    </location>
</feature>
<feature type="helix" evidence="9">
    <location>
        <begin position="423"/>
        <end position="432"/>
    </location>
</feature>
<feature type="strand" evidence="9">
    <location>
        <begin position="436"/>
        <end position="441"/>
    </location>
</feature>
<feature type="strand" evidence="9">
    <location>
        <begin position="448"/>
        <end position="450"/>
    </location>
</feature>
<feature type="helix" evidence="9">
    <location>
        <begin position="456"/>
        <end position="458"/>
    </location>
</feature>
<feature type="strand" evidence="9">
    <location>
        <begin position="459"/>
        <end position="461"/>
    </location>
</feature>
<feature type="helix" evidence="9">
    <location>
        <begin position="465"/>
        <end position="470"/>
    </location>
</feature>
<feature type="strand" evidence="9">
    <location>
        <begin position="473"/>
        <end position="481"/>
    </location>
</feature>
<keyword id="KW-0002">3D-structure</keyword>
<keyword id="KW-0521">NADP</keyword>
<keyword id="KW-0560">Oxidoreductase</keyword>
<keyword id="KW-1185">Reference proteome</keyword>
<name>GABD_ECOLI</name>
<reference key="1">
    <citation type="journal article" date="1993" name="Arch. Microbiol.">
        <title>Molecular organization of the Escherichia coli gab cluster: nucleotide sequence of the structural genes gabD and gabP and expression of the GABA permease gene.</title>
        <authorList>
            <person name="Niegemann E."/>
            <person name="Schulz A."/>
            <person name="Bartsch K."/>
        </authorList>
    </citation>
    <scope>NUCLEOTIDE SEQUENCE [GENOMIC DNA]</scope>
    <source>
        <strain>K12 / JM103 / ATCC 39403 / DSM 2829 / KCTC 1112 / NCIMB 12044</strain>
    </source>
</reference>
<reference key="2">
    <citation type="journal article" date="1997" name="DNA Res.">
        <title>Construction of a contiguous 874-kb sequence of the Escherichia coli-K12 genome corresponding to 50.0-68.8 min on the linkage map and analysis of its sequence features.</title>
        <authorList>
            <person name="Yamamoto Y."/>
            <person name="Aiba H."/>
            <person name="Baba T."/>
            <person name="Hayashi K."/>
            <person name="Inada T."/>
            <person name="Isono K."/>
            <person name="Itoh T."/>
            <person name="Kimura S."/>
            <person name="Kitagawa M."/>
            <person name="Makino K."/>
            <person name="Miki T."/>
            <person name="Mitsuhashi N."/>
            <person name="Mizobuchi K."/>
            <person name="Mori H."/>
            <person name="Nakade S."/>
            <person name="Nakamura Y."/>
            <person name="Nashimoto H."/>
            <person name="Oshima T."/>
            <person name="Oyama S."/>
            <person name="Saito N."/>
            <person name="Sampei G."/>
            <person name="Satoh Y."/>
            <person name="Sivasundaram S."/>
            <person name="Tagami H."/>
            <person name="Takahashi H."/>
            <person name="Takeda J."/>
            <person name="Takemoto K."/>
            <person name="Uehara K."/>
            <person name="Wada C."/>
            <person name="Yamagata S."/>
            <person name="Horiuchi T."/>
        </authorList>
    </citation>
    <scope>NUCLEOTIDE SEQUENCE [LARGE SCALE GENOMIC DNA]</scope>
    <source>
        <strain>K12 / W3110 / ATCC 27325 / DSM 5911</strain>
    </source>
</reference>
<reference key="3">
    <citation type="journal article" date="1997" name="Science">
        <title>The complete genome sequence of Escherichia coli K-12.</title>
        <authorList>
            <person name="Blattner F.R."/>
            <person name="Plunkett G. III"/>
            <person name="Bloch C.A."/>
            <person name="Perna N.T."/>
            <person name="Burland V."/>
            <person name="Riley M."/>
            <person name="Collado-Vides J."/>
            <person name="Glasner J.D."/>
            <person name="Rode C.K."/>
            <person name="Mayhew G.F."/>
            <person name="Gregor J."/>
            <person name="Davis N.W."/>
            <person name="Kirkpatrick H.A."/>
            <person name="Goeden M.A."/>
            <person name="Rose D.J."/>
            <person name="Mau B."/>
            <person name="Shao Y."/>
        </authorList>
    </citation>
    <scope>NUCLEOTIDE SEQUENCE [LARGE SCALE GENOMIC DNA]</scope>
    <source>
        <strain>K12 / MG1655 / ATCC 47076</strain>
    </source>
</reference>
<reference key="4">
    <citation type="journal article" date="2006" name="Mol. Syst. Biol.">
        <title>Highly accurate genome sequences of Escherichia coli K-12 strains MG1655 and W3110.</title>
        <authorList>
            <person name="Hayashi K."/>
            <person name="Morooka N."/>
            <person name="Yamamoto Y."/>
            <person name="Fujita K."/>
            <person name="Isono K."/>
            <person name="Choi S."/>
            <person name="Ohtsubo E."/>
            <person name="Baba T."/>
            <person name="Wanner B.L."/>
            <person name="Mori H."/>
            <person name="Horiuchi T."/>
        </authorList>
    </citation>
    <scope>NUCLEOTIDE SEQUENCE [LARGE SCALE GENOMIC DNA]</scope>
    <scope>SEQUENCE REVISION</scope>
    <source>
        <strain>K12 / W3110 / ATCC 27325 / DSM 5911</strain>
    </source>
</reference>
<reference key="5">
    <citation type="journal article" date="1981" name="Eur. J. Biochem.">
        <title>Succinic semialdehyde dehydrogenases of Escherichia coli: their role in the degradation of p-hydroxyphenylacetate and gamma-aminobutyrate.</title>
        <authorList>
            <person name="Donnelly M.I."/>
            <person name="Cooper R.A."/>
        </authorList>
    </citation>
    <scope>FUNCTION</scope>
    <scope>INDUCTION</scope>
    <source>
        <strain>K12</strain>
    </source>
</reference>
<reference key="6">
    <citation type="journal article" date="2004" name="Mol. Microbiol.">
        <title>Multiple stress signal integration in the regulation of the complex sigma S-dependent csiD-ygaF-gabDTP operon in Escherichia coli.</title>
        <authorList>
            <person name="Metzner M."/>
            <person name="Germer J."/>
            <person name="Hengge R."/>
        </authorList>
    </citation>
    <scope>INDUCTION</scope>
    <source>
        <strain>K12 / MC4100 / ATCC 35695 / DSM 6574</strain>
    </source>
</reference>
<reference key="7">
    <citation type="journal article" date="2018" name="Nat. Commun.">
        <title>Widespread bacterial lysine degradation proceeding via glutarate and L-2-hydroxyglutarate.</title>
        <authorList>
            <person name="Knorr S."/>
            <person name="Sinn M."/>
            <person name="Galetskiy D."/>
            <person name="Williams R.M."/>
            <person name="Wang C."/>
            <person name="Mueller N."/>
            <person name="Mayans O."/>
            <person name="Schleheck D."/>
            <person name="Hartig J.S."/>
        </authorList>
    </citation>
    <scope>FUNCTION</scope>
    <scope>CATALYTIC ACTIVITY</scope>
    <scope>PATHWAY</scope>
    <source>
        <strain>K12 / BW25113</strain>
    </source>
</reference>
<reference key="8">
    <citation type="journal article" date="2010" name="PLoS ONE">
        <title>The X-ray crystal structure of Escherichia coli succinic semialdehyde dehydrogenase; structural insights into NADP+/enzyme interactions.</title>
        <authorList>
            <person name="Langendorf C.G."/>
            <person name="Key T.L."/>
            <person name="Fenalti G."/>
            <person name="Kan W.T."/>
            <person name="Buckle A.M."/>
            <person name="Caradoc-Davies T."/>
            <person name="Tuck K.L."/>
            <person name="Law R.H."/>
            <person name="Whisstock J.C."/>
        </authorList>
    </citation>
    <scope>X-RAY CRYSTALLOGRAPHY (2.3 ANGSTROMS) IN COMPLEX WITH NADP(+)</scope>
    <scope>FUNCTION</scope>
    <scope>CATALYTIC ACTIVITY</scope>
    <scope>KINETIC PARAMETERS</scope>
    <scope>REACTION MECHANISM</scope>
    <scope>SUBUNIT</scope>
    <source>
        <strain>K12</strain>
    </source>
</reference>
<proteinExistence type="evidence at protein level"/>
<accession>P25526</accession>
<accession>P78207</accession>
<accession>P78208</accession>
<accession>P78209</accession>
<organism>
    <name type="scientific">Escherichia coli (strain K12)</name>
    <dbReference type="NCBI Taxonomy" id="83333"/>
    <lineage>
        <taxon>Bacteria</taxon>
        <taxon>Pseudomonadati</taxon>
        <taxon>Pseudomonadota</taxon>
        <taxon>Gammaproteobacteria</taxon>
        <taxon>Enterobacterales</taxon>
        <taxon>Enterobacteriaceae</taxon>
        <taxon>Escherichia</taxon>
    </lineage>
</organism>
<comment type="function">
    <text evidence="2 3 8">Catalyzes the NADP(+)-dependent oxidation of succinate semialdehyde to succinate (PubMed:20174634). Thereby functions in a GABA degradation pathway that allows some E.coli strains to utilize GABA as a nitrogen source for growth (PubMed:7011797). Also catalyzes the conversion of glutarate semialdehyde to glutarate, as part of a L-lysine degradation pathway that proceeds via cadaverine, glutarate and L-2-hydroxyglutarate (PubMed:30498244).</text>
</comment>
<comment type="catalytic activity">
    <reaction evidence="2">
        <text>succinate semialdehyde + NADP(+) + H2O = succinate + NADPH + 2 H(+)</text>
        <dbReference type="Rhea" id="RHEA:13213"/>
        <dbReference type="ChEBI" id="CHEBI:15377"/>
        <dbReference type="ChEBI" id="CHEBI:15378"/>
        <dbReference type="ChEBI" id="CHEBI:30031"/>
        <dbReference type="ChEBI" id="CHEBI:57706"/>
        <dbReference type="ChEBI" id="CHEBI:57783"/>
        <dbReference type="ChEBI" id="CHEBI:58349"/>
        <dbReference type="EC" id="1.2.1.79"/>
    </reaction>
    <physiologicalReaction direction="left-to-right" evidence="6">
        <dbReference type="Rhea" id="RHEA:13214"/>
    </physiologicalReaction>
</comment>
<comment type="catalytic activity">
    <reaction evidence="3">
        <text>5-oxopentanoate + NADP(+) + H2O = glutarate + NADPH + 2 H(+)</text>
        <dbReference type="Rhea" id="RHEA:57832"/>
        <dbReference type="ChEBI" id="CHEBI:15377"/>
        <dbReference type="ChEBI" id="CHEBI:15378"/>
        <dbReference type="ChEBI" id="CHEBI:16120"/>
        <dbReference type="ChEBI" id="CHEBI:30921"/>
        <dbReference type="ChEBI" id="CHEBI:57783"/>
        <dbReference type="ChEBI" id="CHEBI:58349"/>
    </reaction>
    <physiologicalReaction direction="left-to-right" evidence="7">
        <dbReference type="Rhea" id="RHEA:57833"/>
    </physiologicalReaction>
</comment>
<comment type="biophysicochemical properties">
    <kinetics>
        <KM evidence="2">16.94 uM for succinate semialdehyde</KM>
        <text>The succinate-semialdehyde dehydrogenase activity measured in the presence of NADP(+) is approximately 20-fold higher than that measured in the presence of NAD(+).</text>
    </kinetics>
</comment>
<comment type="pathway">
    <text evidence="8">Amino-acid degradation; 4-aminobutanoate degradation.</text>
</comment>
<comment type="pathway">
    <text evidence="7">Amino-acid degradation.</text>
</comment>
<comment type="subunit">
    <text evidence="2">Homotetramer.</text>
</comment>
<comment type="induction">
    <text evidence="1 4">Induced by RpoS in response to multiple stress conditions, including shifts to acidic pH, nitrogen limitation or high osmolarity as well as starvation or stationary phase (PubMed:14731280). Induced by gamma-aminobutyrate (GABA) (PubMed:7011797).</text>
</comment>
<comment type="similarity">
    <text evidence="5">Belongs to the aldehyde dehydrogenase family.</text>
</comment>